<feature type="chain" id="PRO_1000142555" description="Large ribosomal subunit protein bL25">
    <location>
        <begin position="1"/>
        <end position="217"/>
    </location>
</feature>
<feature type="region of interest" description="Disordered" evidence="2">
    <location>
        <begin position="187"/>
        <end position="217"/>
    </location>
</feature>
<feature type="compositionally biased region" description="Acidic residues" evidence="2">
    <location>
        <begin position="193"/>
        <end position="207"/>
    </location>
</feature>
<feature type="compositionally biased region" description="Basic and acidic residues" evidence="2">
    <location>
        <begin position="208"/>
        <end position="217"/>
    </location>
</feature>
<dbReference type="EMBL" id="CP001185">
    <property type="protein sequence ID" value="ACJ74890.1"/>
    <property type="molecule type" value="Genomic_DNA"/>
</dbReference>
<dbReference type="RefSeq" id="WP_004104129.1">
    <property type="nucleotide sequence ID" value="NC_011653.1"/>
</dbReference>
<dbReference type="SMR" id="B7IFM6"/>
<dbReference type="STRING" id="484019.THA_397"/>
<dbReference type="KEGG" id="taf:THA_397"/>
<dbReference type="eggNOG" id="COG1825">
    <property type="taxonomic scope" value="Bacteria"/>
</dbReference>
<dbReference type="HOGENOM" id="CLU_075939_2_1_0"/>
<dbReference type="OrthoDB" id="9790002at2"/>
<dbReference type="Proteomes" id="UP000002453">
    <property type="component" value="Chromosome"/>
</dbReference>
<dbReference type="GO" id="GO:0022625">
    <property type="term" value="C:cytosolic large ribosomal subunit"/>
    <property type="evidence" value="ECO:0007669"/>
    <property type="project" value="TreeGrafter"/>
</dbReference>
<dbReference type="GO" id="GO:0008097">
    <property type="term" value="F:5S rRNA binding"/>
    <property type="evidence" value="ECO:0007669"/>
    <property type="project" value="InterPro"/>
</dbReference>
<dbReference type="GO" id="GO:0003735">
    <property type="term" value="F:structural constituent of ribosome"/>
    <property type="evidence" value="ECO:0007669"/>
    <property type="project" value="InterPro"/>
</dbReference>
<dbReference type="GO" id="GO:0006412">
    <property type="term" value="P:translation"/>
    <property type="evidence" value="ECO:0007669"/>
    <property type="project" value="UniProtKB-UniRule"/>
</dbReference>
<dbReference type="CDD" id="cd00495">
    <property type="entry name" value="Ribosomal_L25_TL5_CTC"/>
    <property type="match status" value="1"/>
</dbReference>
<dbReference type="Gene3D" id="2.170.120.20">
    <property type="entry name" value="Ribosomal protein L25, beta domain"/>
    <property type="match status" value="1"/>
</dbReference>
<dbReference type="Gene3D" id="2.40.240.10">
    <property type="entry name" value="Ribosomal Protein L25, Chain P"/>
    <property type="match status" value="1"/>
</dbReference>
<dbReference type="HAMAP" id="MF_01334">
    <property type="entry name" value="Ribosomal_bL25_CTC"/>
    <property type="match status" value="1"/>
</dbReference>
<dbReference type="InterPro" id="IPR020056">
    <property type="entry name" value="Rbsml_bL25/Gln-tRNA_synth_N"/>
</dbReference>
<dbReference type="InterPro" id="IPR011035">
    <property type="entry name" value="Ribosomal_bL25/Gln-tRNA_synth"/>
</dbReference>
<dbReference type="InterPro" id="IPR020057">
    <property type="entry name" value="Ribosomal_bL25_b-dom"/>
</dbReference>
<dbReference type="InterPro" id="IPR037121">
    <property type="entry name" value="Ribosomal_bL25_C"/>
</dbReference>
<dbReference type="InterPro" id="IPR001021">
    <property type="entry name" value="Ribosomal_bL25_long"/>
</dbReference>
<dbReference type="InterPro" id="IPR029751">
    <property type="entry name" value="Ribosomal_L25_dom"/>
</dbReference>
<dbReference type="InterPro" id="IPR020930">
    <property type="entry name" value="Ribosomal_uL5_bac-type"/>
</dbReference>
<dbReference type="NCBIfam" id="TIGR00731">
    <property type="entry name" value="bL25_bact_ctc"/>
    <property type="match status" value="1"/>
</dbReference>
<dbReference type="PANTHER" id="PTHR33284">
    <property type="entry name" value="RIBOSOMAL PROTEIN L25/GLN-TRNA SYNTHETASE, ANTI-CODON-BINDING DOMAIN-CONTAINING PROTEIN"/>
    <property type="match status" value="1"/>
</dbReference>
<dbReference type="PANTHER" id="PTHR33284:SF1">
    <property type="entry name" value="RIBOSOMAL PROTEIN L25_GLN-TRNA SYNTHETASE, ANTI-CODON-BINDING DOMAIN-CONTAINING PROTEIN"/>
    <property type="match status" value="1"/>
</dbReference>
<dbReference type="Pfam" id="PF01386">
    <property type="entry name" value="Ribosomal_L25p"/>
    <property type="match status" value="1"/>
</dbReference>
<dbReference type="Pfam" id="PF14693">
    <property type="entry name" value="Ribosomal_TL5_C"/>
    <property type="match status" value="1"/>
</dbReference>
<dbReference type="SUPFAM" id="SSF50715">
    <property type="entry name" value="Ribosomal protein L25-like"/>
    <property type="match status" value="1"/>
</dbReference>
<reference key="1">
    <citation type="journal article" date="2009" name="J. Bacteriol.">
        <title>The genome of Thermosipho africanus TCF52B: lateral genetic connections to the Firmicutes and Archaea.</title>
        <authorList>
            <person name="Nesboe C.L."/>
            <person name="Bapteste E."/>
            <person name="Curtis B."/>
            <person name="Dahle H."/>
            <person name="Lopez P."/>
            <person name="Macleod D."/>
            <person name="Dlutek M."/>
            <person name="Bowman S."/>
            <person name="Zhaxybayeva O."/>
            <person name="Birkeland N.-K."/>
            <person name="Doolittle W.F."/>
        </authorList>
    </citation>
    <scope>NUCLEOTIDE SEQUENCE [LARGE SCALE GENOMIC DNA]</scope>
    <source>
        <strain>TCF52B</strain>
    </source>
</reference>
<protein>
    <recommendedName>
        <fullName evidence="1">Large ribosomal subunit protein bL25</fullName>
    </recommendedName>
    <alternativeName>
        <fullName evidence="3">50S ribosomal protein L25</fullName>
    </alternativeName>
    <alternativeName>
        <fullName evidence="1">General stress protein CTC</fullName>
    </alternativeName>
</protein>
<gene>
    <name evidence="1" type="primary">rplY</name>
    <name evidence="1" type="synonym">ctc</name>
    <name type="ordered locus">THA_397</name>
</gene>
<proteinExistence type="inferred from homology"/>
<name>RL25_THEAB</name>
<keyword id="KW-1185">Reference proteome</keyword>
<keyword id="KW-0687">Ribonucleoprotein</keyword>
<keyword id="KW-0689">Ribosomal protein</keyword>
<keyword id="KW-0694">RNA-binding</keyword>
<keyword id="KW-0699">rRNA-binding</keyword>
<comment type="function">
    <text evidence="1">This is one of the proteins that binds to the 5S RNA in the ribosome where it forms part of the central protuberance.</text>
</comment>
<comment type="subunit">
    <text evidence="1">Part of the 50S ribosomal subunit; part of the 5S rRNA/L5/L18/L25 subcomplex. Contacts the 5S rRNA. Binds to the 5S rRNA independently of L5 and L18.</text>
</comment>
<comment type="similarity">
    <text evidence="1">Belongs to the bacterial ribosomal protein bL25 family. CTC subfamily.</text>
</comment>
<sequence length="217" mass="24355">MEKHTLEALVRSVVGKKRAVRRLRRQGFVPGVVYGPDVEPLSISIKRSNLIKLFHEVTEASIISLTVKDENGKEVFSHDVFIKNVQYDKLTDEVKHVDFYAPEKGHKMKINLPLEFVGKAKGEEKGGVLEIHHHELPVETLPNAVVEKLEIDVSNLDLGQALYVKDLKLPEGMEAELDEEEIIAIVSTPSGLEVEEETGEEESAEPEVIEKGKKEEE</sequence>
<evidence type="ECO:0000255" key="1">
    <source>
        <dbReference type="HAMAP-Rule" id="MF_01334"/>
    </source>
</evidence>
<evidence type="ECO:0000256" key="2">
    <source>
        <dbReference type="SAM" id="MobiDB-lite"/>
    </source>
</evidence>
<evidence type="ECO:0000305" key="3"/>
<accession>B7IFM6</accession>
<organism>
    <name type="scientific">Thermosipho africanus (strain TCF52B)</name>
    <dbReference type="NCBI Taxonomy" id="484019"/>
    <lineage>
        <taxon>Bacteria</taxon>
        <taxon>Thermotogati</taxon>
        <taxon>Thermotogota</taxon>
        <taxon>Thermotogae</taxon>
        <taxon>Thermotogales</taxon>
        <taxon>Fervidobacteriaceae</taxon>
        <taxon>Thermosipho</taxon>
    </lineage>
</organism>